<sequence length="163" mass="18817">MENNKKLTLCEIPNAFIQFFNNKDYENKSKLFNNTETDQWWVSGDKNVYPFAGSDSIQKRLDGFQTLQNGYDKYSMTLIDQIIDHERRIMLVVGKTVSMGFGMTKEYSNEYAFIISVNEDGKICAIKEYFDPSAYLKMAQSTPSLQGIFKNFFPDSFAPTSRD</sequence>
<keyword id="KW-1185">Reference proteome</keyword>
<organism>
    <name type="scientific">Dictyostelium discoideum</name>
    <name type="common">Social amoeba</name>
    <dbReference type="NCBI Taxonomy" id="44689"/>
    <lineage>
        <taxon>Eukaryota</taxon>
        <taxon>Amoebozoa</taxon>
        <taxon>Evosea</taxon>
        <taxon>Eumycetozoa</taxon>
        <taxon>Dictyostelia</taxon>
        <taxon>Dictyosteliales</taxon>
        <taxon>Dictyosteliaceae</taxon>
        <taxon>Dictyostelium</taxon>
    </lineage>
</organism>
<name>U523B_DICDI</name>
<feature type="chain" id="PRO_0000319967" description="UPF0523 protein B">
    <location>
        <begin position="1"/>
        <end position="163"/>
    </location>
</feature>
<gene>
    <name type="ORF">DDB_G0287091</name>
</gene>
<comment type="similarity">
    <text evidence="1">Belongs to the UPF0523 family.</text>
</comment>
<evidence type="ECO:0000305" key="1"/>
<reference key="1">
    <citation type="journal article" date="2005" name="Nature">
        <title>The genome of the social amoeba Dictyostelium discoideum.</title>
        <authorList>
            <person name="Eichinger L."/>
            <person name="Pachebat J.A."/>
            <person name="Gloeckner G."/>
            <person name="Rajandream M.A."/>
            <person name="Sucgang R."/>
            <person name="Berriman M."/>
            <person name="Song J."/>
            <person name="Olsen R."/>
            <person name="Szafranski K."/>
            <person name="Xu Q."/>
            <person name="Tunggal B."/>
            <person name="Kummerfeld S."/>
            <person name="Madera M."/>
            <person name="Konfortov B.A."/>
            <person name="Rivero F."/>
            <person name="Bankier A.T."/>
            <person name="Lehmann R."/>
            <person name="Hamlin N."/>
            <person name="Davies R."/>
            <person name="Gaudet P."/>
            <person name="Fey P."/>
            <person name="Pilcher K."/>
            <person name="Chen G."/>
            <person name="Saunders D."/>
            <person name="Sodergren E.J."/>
            <person name="Davis P."/>
            <person name="Kerhornou A."/>
            <person name="Nie X."/>
            <person name="Hall N."/>
            <person name="Anjard C."/>
            <person name="Hemphill L."/>
            <person name="Bason N."/>
            <person name="Farbrother P."/>
            <person name="Desany B."/>
            <person name="Just E."/>
            <person name="Morio T."/>
            <person name="Rost R."/>
            <person name="Churcher C.M."/>
            <person name="Cooper J."/>
            <person name="Haydock S."/>
            <person name="van Driessche N."/>
            <person name="Cronin A."/>
            <person name="Goodhead I."/>
            <person name="Muzny D.M."/>
            <person name="Mourier T."/>
            <person name="Pain A."/>
            <person name="Lu M."/>
            <person name="Harper D."/>
            <person name="Lindsay R."/>
            <person name="Hauser H."/>
            <person name="James K.D."/>
            <person name="Quiles M."/>
            <person name="Madan Babu M."/>
            <person name="Saito T."/>
            <person name="Buchrieser C."/>
            <person name="Wardroper A."/>
            <person name="Felder M."/>
            <person name="Thangavelu M."/>
            <person name="Johnson D."/>
            <person name="Knights A."/>
            <person name="Loulseged H."/>
            <person name="Mungall K.L."/>
            <person name="Oliver K."/>
            <person name="Price C."/>
            <person name="Quail M.A."/>
            <person name="Urushihara H."/>
            <person name="Hernandez J."/>
            <person name="Rabbinowitsch E."/>
            <person name="Steffen D."/>
            <person name="Sanders M."/>
            <person name="Ma J."/>
            <person name="Kohara Y."/>
            <person name="Sharp S."/>
            <person name="Simmonds M.N."/>
            <person name="Spiegler S."/>
            <person name="Tivey A."/>
            <person name="Sugano S."/>
            <person name="White B."/>
            <person name="Walker D."/>
            <person name="Woodward J.R."/>
            <person name="Winckler T."/>
            <person name="Tanaka Y."/>
            <person name="Shaulsky G."/>
            <person name="Schleicher M."/>
            <person name="Weinstock G.M."/>
            <person name="Rosenthal A."/>
            <person name="Cox E.C."/>
            <person name="Chisholm R.L."/>
            <person name="Gibbs R.A."/>
            <person name="Loomis W.F."/>
            <person name="Platzer M."/>
            <person name="Kay R.R."/>
            <person name="Williams J.G."/>
            <person name="Dear P.H."/>
            <person name="Noegel A.A."/>
            <person name="Barrell B.G."/>
            <person name="Kuspa A."/>
        </authorList>
    </citation>
    <scope>NUCLEOTIDE SEQUENCE [LARGE SCALE GENOMIC DNA]</scope>
    <source>
        <strain>AX4</strain>
    </source>
</reference>
<protein>
    <recommendedName>
        <fullName>UPF0523 protein B</fullName>
    </recommendedName>
</protein>
<proteinExistence type="inferred from homology"/>
<dbReference type="EMBL" id="AAFI02000096">
    <property type="protein sequence ID" value="EAL63910.1"/>
    <property type="molecule type" value="Genomic_DNA"/>
</dbReference>
<dbReference type="RefSeq" id="XP_637422.1">
    <property type="nucleotide sequence ID" value="XM_632330.1"/>
</dbReference>
<dbReference type="SMR" id="Q54KU8"/>
<dbReference type="FunCoup" id="Q54KU8">
    <property type="interactions" value="2"/>
</dbReference>
<dbReference type="STRING" id="44689.Q54KU8"/>
<dbReference type="PaxDb" id="44689-DDB0187278"/>
<dbReference type="EnsemblProtists" id="EAL63910">
    <property type="protein sequence ID" value="EAL63910"/>
    <property type="gene ID" value="DDB_G0287091"/>
</dbReference>
<dbReference type="GeneID" id="8625955"/>
<dbReference type="KEGG" id="ddi:DDB_G0287091"/>
<dbReference type="dictyBase" id="DDB_G0287091">
    <property type="gene designation" value="staE"/>
</dbReference>
<dbReference type="VEuPathDB" id="AmoebaDB:DDB_G0287091"/>
<dbReference type="eggNOG" id="ENOG502RI8Q">
    <property type="taxonomic scope" value="Eukaryota"/>
</dbReference>
<dbReference type="HOGENOM" id="CLU_1689981_0_0_1"/>
<dbReference type="InParanoid" id="Q54KU8"/>
<dbReference type="PhylomeDB" id="Q54KU8"/>
<dbReference type="PRO" id="PR:Q54KU8"/>
<dbReference type="Proteomes" id="UP000002195">
    <property type="component" value="Chromosome 4"/>
</dbReference>
<dbReference type="Gene3D" id="3.10.450.50">
    <property type="match status" value="1"/>
</dbReference>
<dbReference type="InterPro" id="IPR032710">
    <property type="entry name" value="NTF2-like_dom_sf"/>
</dbReference>
<dbReference type="SUPFAM" id="SSF54427">
    <property type="entry name" value="NTF2-like"/>
    <property type="match status" value="1"/>
</dbReference>
<accession>Q54KU8</accession>